<name>PYRB_STAEQ</name>
<proteinExistence type="inferred from homology"/>
<dbReference type="EC" id="2.1.3.2" evidence="1"/>
<dbReference type="EMBL" id="CP000029">
    <property type="protein sequence ID" value="AAW54169.1"/>
    <property type="molecule type" value="Genomic_DNA"/>
</dbReference>
<dbReference type="RefSeq" id="WP_002475924.1">
    <property type="nucleotide sequence ID" value="NC_002976.3"/>
</dbReference>
<dbReference type="SMR" id="Q5HPZ1"/>
<dbReference type="STRING" id="176279.SERP0766"/>
<dbReference type="KEGG" id="ser:SERP0766"/>
<dbReference type="eggNOG" id="COG0540">
    <property type="taxonomic scope" value="Bacteria"/>
</dbReference>
<dbReference type="HOGENOM" id="CLU_043846_2_1_9"/>
<dbReference type="UniPathway" id="UPA00070">
    <property type="reaction ID" value="UER00116"/>
</dbReference>
<dbReference type="Proteomes" id="UP000000531">
    <property type="component" value="Chromosome"/>
</dbReference>
<dbReference type="GO" id="GO:0005829">
    <property type="term" value="C:cytosol"/>
    <property type="evidence" value="ECO:0007669"/>
    <property type="project" value="TreeGrafter"/>
</dbReference>
<dbReference type="GO" id="GO:0016597">
    <property type="term" value="F:amino acid binding"/>
    <property type="evidence" value="ECO:0007669"/>
    <property type="project" value="InterPro"/>
</dbReference>
<dbReference type="GO" id="GO:0004070">
    <property type="term" value="F:aspartate carbamoyltransferase activity"/>
    <property type="evidence" value="ECO:0007669"/>
    <property type="project" value="UniProtKB-UniRule"/>
</dbReference>
<dbReference type="GO" id="GO:0006207">
    <property type="term" value="P:'de novo' pyrimidine nucleobase biosynthetic process"/>
    <property type="evidence" value="ECO:0007669"/>
    <property type="project" value="InterPro"/>
</dbReference>
<dbReference type="GO" id="GO:0044205">
    <property type="term" value="P:'de novo' UMP biosynthetic process"/>
    <property type="evidence" value="ECO:0007669"/>
    <property type="project" value="UniProtKB-UniRule"/>
</dbReference>
<dbReference type="GO" id="GO:0006520">
    <property type="term" value="P:amino acid metabolic process"/>
    <property type="evidence" value="ECO:0007669"/>
    <property type="project" value="InterPro"/>
</dbReference>
<dbReference type="FunFam" id="3.40.50.1370:FF:000011">
    <property type="entry name" value="Aspartate carbamoyltransferase"/>
    <property type="match status" value="1"/>
</dbReference>
<dbReference type="Gene3D" id="3.40.50.1370">
    <property type="entry name" value="Aspartate/ornithine carbamoyltransferase"/>
    <property type="match status" value="2"/>
</dbReference>
<dbReference type="HAMAP" id="MF_00001">
    <property type="entry name" value="Asp_carb_tr"/>
    <property type="match status" value="1"/>
</dbReference>
<dbReference type="InterPro" id="IPR006132">
    <property type="entry name" value="Asp/Orn_carbamoyltranf_P-bd"/>
</dbReference>
<dbReference type="InterPro" id="IPR006130">
    <property type="entry name" value="Asp/Orn_carbamoylTrfase"/>
</dbReference>
<dbReference type="InterPro" id="IPR036901">
    <property type="entry name" value="Asp/Orn_carbamoylTrfase_sf"/>
</dbReference>
<dbReference type="InterPro" id="IPR002082">
    <property type="entry name" value="Asp_carbamoyltransf"/>
</dbReference>
<dbReference type="InterPro" id="IPR006131">
    <property type="entry name" value="Asp_carbamoyltransf_Asp/Orn-bd"/>
</dbReference>
<dbReference type="NCBIfam" id="TIGR00670">
    <property type="entry name" value="asp_carb_tr"/>
    <property type="match status" value="1"/>
</dbReference>
<dbReference type="NCBIfam" id="NF002032">
    <property type="entry name" value="PRK00856.1"/>
    <property type="match status" value="1"/>
</dbReference>
<dbReference type="PANTHER" id="PTHR45753:SF6">
    <property type="entry name" value="ASPARTATE CARBAMOYLTRANSFERASE"/>
    <property type="match status" value="1"/>
</dbReference>
<dbReference type="PANTHER" id="PTHR45753">
    <property type="entry name" value="ORNITHINE CARBAMOYLTRANSFERASE, MITOCHONDRIAL"/>
    <property type="match status" value="1"/>
</dbReference>
<dbReference type="Pfam" id="PF00185">
    <property type="entry name" value="OTCace"/>
    <property type="match status" value="1"/>
</dbReference>
<dbReference type="Pfam" id="PF02729">
    <property type="entry name" value="OTCace_N"/>
    <property type="match status" value="1"/>
</dbReference>
<dbReference type="PRINTS" id="PR00100">
    <property type="entry name" value="AOTCASE"/>
</dbReference>
<dbReference type="PRINTS" id="PR00101">
    <property type="entry name" value="ATCASE"/>
</dbReference>
<dbReference type="SUPFAM" id="SSF53671">
    <property type="entry name" value="Aspartate/ornithine carbamoyltransferase"/>
    <property type="match status" value="1"/>
</dbReference>
<dbReference type="PROSITE" id="PS00097">
    <property type="entry name" value="CARBAMOYLTRANSFERASE"/>
    <property type="match status" value="1"/>
</dbReference>
<keyword id="KW-0665">Pyrimidine biosynthesis</keyword>
<keyword id="KW-1185">Reference proteome</keyword>
<keyword id="KW-0808">Transferase</keyword>
<evidence type="ECO:0000255" key="1">
    <source>
        <dbReference type="HAMAP-Rule" id="MF_00001"/>
    </source>
</evidence>
<comment type="function">
    <text evidence="1">Catalyzes the condensation of carbamoyl phosphate and aspartate to form carbamoyl aspartate and inorganic phosphate, the committed step in the de novo pyrimidine nucleotide biosynthesis pathway.</text>
</comment>
<comment type="catalytic activity">
    <reaction evidence="1">
        <text>carbamoyl phosphate + L-aspartate = N-carbamoyl-L-aspartate + phosphate + H(+)</text>
        <dbReference type="Rhea" id="RHEA:20013"/>
        <dbReference type="ChEBI" id="CHEBI:15378"/>
        <dbReference type="ChEBI" id="CHEBI:29991"/>
        <dbReference type="ChEBI" id="CHEBI:32814"/>
        <dbReference type="ChEBI" id="CHEBI:43474"/>
        <dbReference type="ChEBI" id="CHEBI:58228"/>
        <dbReference type="EC" id="2.1.3.2"/>
    </reaction>
</comment>
<comment type="pathway">
    <text evidence="1">Pyrimidine metabolism; UMP biosynthesis via de novo pathway; (S)-dihydroorotate from bicarbonate: step 2/3.</text>
</comment>
<comment type="subunit">
    <text evidence="1">Heterododecamer (2C3:3R2) of six catalytic PyrB chains organized as two trimers (C3), and six regulatory PyrI chains organized as three dimers (R2).</text>
</comment>
<comment type="similarity">
    <text evidence="1">Belongs to the aspartate/ornithine carbamoyltransferase superfamily. ATCase family.</text>
</comment>
<accession>Q5HPZ1</accession>
<reference key="1">
    <citation type="journal article" date="2005" name="J. Bacteriol.">
        <title>Insights on evolution of virulence and resistance from the complete genome analysis of an early methicillin-resistant Staphylococcus aureus strain and a biofilm-producing methicillin-resistant Staphylococcus epidermidis strain.</title>
        <authorList>
            <person name="Gill S.R."/>
            <person name="Fouts D.E."/>
            <person name="Archer G.L."/>
            <person name="Mongodin E.F."/>
            <person name="DeBoy R.T."/>
            <person name="Ravel J."/>
            <person name="Paulsen I.T."/>
            <person name="Kolonay J.F."/>
            <person name="Brinkac L.M."/>
            <person name="Beanan M.J."/>
            <person name="Dodson R.J."/>
            <person name="Daugherty S.C."/>
            <person name="Madupu R."/>
            <person name="Angiuoli S.V."/>
            <person name="Durkin A.S."/>
            <person name="Haft D.H."/>
            <person name="Vamathevan J.J."/>
            <person name="Khouri H."/>
            <person name="Utterback T.R."/>
            <person name="Lee C."/>
            <person name="Dimitrov G."/>
            <person name="Jiang L."/>
            <person name="Qin H."/>
            <person name="Weidman J."/>
            <person name="Tran K."/>
            <person name="Kang K.H."/>
            <person name="Hance I.R."/>
            <person name="Nelson K.E."/>
            <person name="Fraser C.M."/>
        </authorList>
    </citation>
    <scope>NUCLEOTIDE SEQUENCE [LARGE SCALE GENOMIC DNA]</scope>
    <source>
        <strain>ATCC 35984 / DSM 28319 / BCRC 17069 / CCUG 31568 / BM 3577 / RP62A</strain>
    </source>
</reference>
<sequence>MEHLLSMEHLSNSEIYDLITIACQFKSGERPLPQFNGQYVSNLFFENSTRTKCSFEMAEQKLGLKLINFETSTSSVKKGESLYDTCKTLESIGVDLLVIRHSQNSYYEELNQLNIPIANAGDGSGQHPTQSLLDIMTIYEEYGSFEGLNILICGDIKNSRVARSNYHSLTSLGANVMFSSPKEWVDNTLEAPYVEIDEVIDKVDIVMLLRVQHERHGISGEANFAAEEYHQQFGLTQARYDKLKEEAIVMHPAPVNRGVEIKSELVEAPKSRIFKQMENGMYLRMAVISALLQ</sequence>
<gene>
    <name evidence="1" type="primary">pyrB</name>
    <name type="ordered locus">SERP0766</name>
</gene>
<protein>
    <recommendedName>
        <fullName evidence="1">Aspartate carbamoyltransferase catalytic subunit</fullName>
        <ecNumber evidence="1">2.1.3.2</ecNumber>
    </recommendedName>
    <alternativeName>
        <fullName evidence="1">Aspartate transcarbamylase</fullName>
        <shortName evidence="1">ATCase</shortName>
    </alternativeName>
</protein>
<organism>
    <name type="scientific">Staphylococcus epidermidis (strain ATCC 35984 / DSM 28319 / BCRC 17069 / CCUG 31568 / BM 3577 / RP62A)</name>
    <dbReference type="NCBI Taxonomy" id="176279"/>
    <lineage>
        <taxon>Bacteria</taxon>
        <taxon>Bacillati</taxon>
        <taxon>Bacillota</taxon>
        <taxon>Bacilli</taxon>
        <taxon>Bacillales</taxon>
        <taxon>Staphylococcaceae</taxon>
        <taxon>Staphylococcus</taxon>
    </lineage>
</organism>
<feature type="chain" id="PRO_0000113200" description="Aspartate carbamoyltransferase catalytic subunit">
    <location>
        <begin position="1"/>
        <end position="293"/>
    </location>
</feature>
<feature type="binding site" evidence="1">
    <location>
        <position position="50"/>
    </location>
    <ligand>
        <name>carbamoyl phosphate</name>
        <dbReference type="ChEBI" id="CHEBI:58228"/>
    </ligand>
</feature>
<feature type="binding site" evidence="1">
    <location>
        <position position="51"/>
    </location>
    <ligand>
        <name>carbamoyl phosphate</name>
        <dbReference type="ChEBI" id="CHEBI:58228"/>
    </ligand>
</feature>
<feature type="binding site" evidence="1">
    <location>
        <position position="78"/>
    </location>
    <ligand>
        <name>L-aspartate</name>
        <dbReference type="ChEBI" id="CHEBI:29991"/>
    </ligand>
</feature>
<feature type="binding site" evidence="1">
    <location>
        <position position="100"/>
    </location>
    <ligand>
        <name>carbamoyl phosphate</name>
        <dbReference type="ChEBI" id="CHEBI:58228"/>
    </ligand>
</feature>
<feature type="binding site" evidence="1">
    <location>
        <position position="127"/>
    </location>
    <ligand>
        <name>carbamoyl phosphate</name>
        <dbReference type="ChEBI" id="CHEBI:58228"/>
    </ligand>
</feature>
<feature type="binding site" evidence="1">
    <location>
        <position position="130"/>
    </location>
    <ligand>
        <name>carbamoyl phosphate</name>
        <dbReference type="ChEBI" id="CHEBI:58228"/>
    </ligand>
</feature>
<feature type="binding site" evidence="1">
    <location>
        <position position="160"/>
    </location>
    <ligand>
        <name>L-aspartate</name>
        <dbReference type="ChEBI" id="CHEBI:29991"/>
    </ligand>
</feature>
<feature type="binding site" evidence="1">
    <location>
        <position position="210"/>
    </location>
    <ligand>
        <name>L-aspartate</name>
        <dbReference type="ChEBI" id="CHEBI:29991"/>
    </ligand>
</feature>
<feature type="binding site" evidence="1">
    <location>
        <position position="253"/>
    </location>
    <ligand>
        <name>carbamoyl phosphate</name>
        <dbReference type="ChEBI" id="CHEBI:58228"/>
    </ligand>
</feature>
<feature type="binding site" evidence="1">
    <location>
        <position position="254"/>
    </location>
    <ligand>
        <name>carbamoyl phosphate</name>
        <dbReference type="ChEBI" id="CHEBI:58228"/>
    </ligand>
</feature>